<dbReference type="EMBL" id="AE001439">
    <property type="protein sequence ID" value="AAD05694.1"/>
    <property type="molecule type" value="Genomic_DNA"/>
</dbReference>
<dbReference type="RefSeq" id="WP_001125542.1">
    <property type="nucleotide sequence ID" value="NZ_CP011330.1"/>
</dbReference>
<dbReference type="SMR" id="P66270"/>
<dbReference type="GeneID" id="93236496"/>
<dbReference type="KEGG" id="hpj:jhp_0115"/>
<dbReference type="PATRIC" id="fig|85963.30.peg.913"/>
<dbReference type="eggNOG" id="COG0291">
    <property type="taxonomic scope" value="Bacteria"/>
</dbReference>
<dbReference type="Proteomes" id="UP000000804">
    <property type="component" value="Chromosome"/>
</dbReference>
<dbReference type="GO" id="GO:0022625">
    <property type="term" value="C:cytosolic large ribosomal subunit"/>
    <property type="evidence" value="ECO:0007669"/>
    <property type="project" value="TreeGrafter"/>
</dbReference>
<dbReference type="GO" id="GO:0003735">
    <property type="term" value="F:structural constituent of ribosome"/>
    <property type="evidence" value="ECO:0007669"/>
    <property type="project" value="InterPro"/>
</dbReference>
<dbReference type="GO" id="GO:0006412">
    <property type="term" value="P:translation"/>
    <property type="evidence" value="ECO:0007669"/>
    <property type="project" value="UniProtKB-UniRule"/>
</dbReference>
<dbReference type="FunFam" id="4.10.410.60:FF:000001">
    <property type="entry name" value="50S ribosomal protein L35"/>
    <property type="match status" value="1"/>
</dbReference>
<dbReference type="Gene3D" id="4.10.410.60">
    <property type="match status" value="1"/>
</dbReference>
<dbReference type="HAMAP" id="MF_00514">
    <property type="entry name" value="Ribosomal_bL35"/>
    <property type="match status" value="1"/>
</dbReference>
<dbReference type="InterPro" id="IPR001706">
    <property type="entry name" value="Ribosomal_bL35"/>
</dbReference>
<dbReference type="InterPro" id="IPR021137">
    <property type="entry name" value="Ribosomal_bL35-like"/>
</dbReference>
<dbReference type="InterPro" id="IPR018265">
    <property type="entry name" value="Ribosomal_bL35_CS"/>
</dbReference>
<dbReference type="InterPro" id="IPR037229">
    <property type="entry name" value="Ribosomal_bL35_sf"/>
</dbReference>
<dbReference type="NCBIfam" id="TIGR00001">
    <property type="entry name" value="rpmI_bact"/>
    <property type="match status" value="1"/>
</dbReference>
<dbReference type="PANTHER" id="PTHR33343">
    <property type="entry name" value="54S RIBOSOMAL PROTEIN BL35M"/>
    <property type="match status" value="1"/>
</dbReference>
<dbReference type="PANTHER" id="PTHR33343:SF1">
    <property type="entry name" value="LARGE RIBOSOMAL SUBUNIT PROTEIN BL35M"/>
    <property type="match status" value="1"/>
</dbReference>
<dbReference type="Pfam" id="PF01632">
    <property type="entry name" value="Ribosomal_L35p"/>
    <property type="match status" value="1"/>
</dbReference>
<dbReference type="PRINTS" id="PR00064">
    <property type="entry name" value="RIBOSOMALL35"/>
</dbReference>
<dbReference type="SUPFAM" id="SSF143034">
    <property type="entry name" value="L35p-like"/>
    <property type="match status" value="1"/>
</dbReference>
<dbReference type="PROSITE" id="PS00936">
    <property type="entry name" value="RIBOSOMAL_L35"/>
    <property type="match status" value="1"/>
</dbReference>
<keyword id="KW-0687">Ribonucleoprotein</keyword>
<keyword id="KW-0689">Ribosomal protein</keyword>
<gene>
    <name evidence="1" type="primary">rpmI</name>
    <name type="ordered locus">jhp_0115</name>
</gene>
<evidence type="ECO:0000255" key="1">
    <source>
        <dbReference type="HAMAP-Rule" id="MF_00514"/>
    </source>
</evidence>
<evidence type="ECO:0000256" key="2">
    <source>
        <dbReference type="SAM" id="MobiDB-lite"/>
    </source>
</evidence>
<evidence type="ECO:0000305" key="3"/>
<name>RL35_HELPJ</name>
<proteinExistence type="inferred from homology"/>
<comment type="similarity">
    <text evidence="1">Belongs to the bacterial ribosomal protein bL35 family.</text>
</comment>
<feature type="chain" id="PRO_0000177369" description="Large ribosomal subunit protein bL35">
    <location>
        <begin position="1"/>
        <end position="64"/>
    </location>
</feature>
<feature type="region of interest" description="Disordered" evidence="2">
    <location>
        <begin position="38"/>
        <end position="64"/>
    </location>
</feature>
<feature type="compositionally biased region" description="Basic residues" evidence="2">
    <location>
        <begin position="38"/>
        <end position="53"/>
    </location>
</feature>
<reference key="1">
    <citation type="journal article" date="1999" name="Nature">
        <title>Genomic sequence comparison of two unrelated isolates of the human gastric pathogen Helicobacter pylori.</title>
        <authorList>
            <person name="Alm R.A."/>
            <person name="Ling L.-S.L."/>
            <person name="Moir D.T."/>
            <person name="King B.L."/>
            <person name="Brown E.D."/>
            <person name="Doig P.C."/>
            <person name="Smith D.R."/>
            <person name="Noonan B."/>
            <person name="Guild B.C."/>
            <person name="deJonge B.L."/>
            <person name="Carmel G."/>
            <person name="Tummino P.J."/>
            <person name="Caruso A."/>
            <person name="Uria-Nickelsen M."/>
            <person name="Mills D.M."/>
            <person name="Ives C."/>
            <person name="Gibson R."/>
            <person name="Merberg D."/>
            <person name="Mills S.D."/>
            <person name="Jiang Q."/>
            <person name="Taylor D.E."/>
            <person name="Vovis G.F."/>
            <person name="Trust T.J."/>
        </authorList>
    </citation>
    <scope>NUCLEOTIDE SEQUENCE [LARGE SCALE GENOMIC DNA]</scope>
    <source>
        <strain>J99 / ATCC 700824</strain>
    </source>
</reference>
<protein>
    <recommendedName>
        <fullName evidence="1">Large ribosomal subunit protein bL35</fullName>
    </recommendedName>
    <alternativeName>
        <fullName evidence="3">50S ribosomal protein L35</fullName>
    </alternativeName>
</protein>
<organism>
    <name type="scientific">Helicobacter pylori (strain J99 / ATCC 700824)</name>
    <name type="common">Campylobacter pylori J99</name>
    <dbReference type="NCBI Taxonomy" id="85963"/>
    <lineage>
        <taxon>Bacteria</taxon>
        <taxon>Pseudomonadati</taxon>
        <taxon>Campylobacterota</taxon>
        <taxon>Epsilonproteobacteria</taxon>
        <taxon>Campylobacterales</taxon>
        <taxon>Helicobacteraceae</taxon>
        <taxon>Helicobacter</taxon>
    </lineage>
</organism>
<sequence>MPKMKTNRGASKRFKVKKNLIKRGSAFKSHILTKKSPKRKANLNAPKHVHHTNAHSVMSLLCRA</sequence>
<accession>P66270</accession>
<accession>P56057</accession>